<organism>
    <name type="scientific">Arabidopsis thaliana</name>
    <name type="common">Mouse-ear cress</name>
    <dbReference type="NCBI Taxonomy" id="3702"/>
    <lineage>
        <taxon>Eukaryota</taxon>
        <taxon>Viridiplantae</taxon>
        <taxon>Streptophyta</taxon>
        <taxon>Embryophyta</taxon>
        <taxon>Tracheophyta</taxon>
        <taxon>Spermatophyta</taxon>
        <taxon>Magnoliopsida</taxon>
        <taxon>eudicotyledons</taxon>
        <taxon>Gunneridae</taxon>
        <taxon>Pentapetalae</taxon>
        <taxon>rosids</taxon>
        <taxon>malvids</taxon>
        <taxon>Brassicales</taxon>
        <taxon>Brassicaceae</taxon>
        <taxon>Camelineae</taxon>
        <taxon>Arabidopsis</taxon>
    </lineage>
</organism>
<comment type="similarity">
    <text evidence="2">Belongs to the UDP-glycosyltransferase family.</text>
</comment>
<comment type="sequence caution" evidence="2">
    <conflict type="erroneous gene model prediction">
        <sequence resource="EMBL-CDS" id="CAB51195"/>
    </conflict>
</comment>
<name>U76E3_ARATH</name>
<proteinExistence type="evidence at transcript level"/>
<feature type="chain" id="PRO_0000409088" description="UDP-glycosyltransferase 76E3">
    <location>
        <begin position="1"/>
        <end position="447"/>
    </location>
</feature>
<feature type="binding site" evidence="1">
    <location>
        <position position="269"/>
    </location>
    <ligand>
        <name>UDP-alpha-D-glucose</name>
        <dbReference type="ChEBI" id="CHEBI:58885"/>
    </ligand>
</feature>
<feature type="binding site" evidence="1">
    <location>
        <begin position="328"/>
        <end position="330"/>
    </location>
    <ligand>
        <name>UDP-alpha-D-glucose</name>
        <dbReference type="ChEBI" id="CHEBI:58885"/>
    </ligand>
</feature>
<feature type="binding site" evidence="1">
    <location>
        <begin position="345"/>
        <end position="353"/>
    </location>
    <ligand>
        <name>UDP-alpha-D-glucose</name>
        <dbReference type="ChEBI" id="CHEBI:58885"/>
    </ligand>
</feature>
<feature type="binding site" evidence="1">
    <location>
        <begin position="367"/>
        <end position="370"/>
    </location>
    <ligand>
        <name>UDP-alpha-D-glucose</name>
        <dbReference type="ChEBI" id="CHEBI:58885"/>
    </ligand>
</feature>
<reference key="1">
    <citation type="journal article" date="2000" name="Nature">
        <title>Sequence and analysis of chromosome 3 of the plant Arabidopsis thaliana.</title>
        <authorList>
            <person name="Salanoubat M."/>
            <person name="Lemcke K."/>
            <person name="Rieger M."/>
            <person name="Ansorge W."/>
            <person name="Unseld M."/>
            <person name="Fartmann B."/>
            <person name="Valle G."/>
            <person name="Bloecker H."/>
            <person name="Perez-Alonso M."/>
            <person name="Obermaier B."/>
            <person name="Delseny M."/>
            <person name="Boutry M."/>
            <person name="Grivell L.A."/>
            <person name="Mache R."/>
            <person name="Puigdomenech P."/>
            <person name="De Simone V."/>
            <person name="Choisne N."/>
            <person name="Artiguenave F."/>
            <person name="Robert C."/>
            <person name="Brottier P."/>
            <person name="Wincker P."/>
            <person name="Cattolico L."/>
            <person name="Weissenbach J."/>
            <person name="Saurin W."/>
            <person name="Quetier F."/>
            <person name="Schaefer M."/>
            <person name="Mueller-Auer S."/>
            <person name="Gabel C."/>
            <person name="Fuchs M."/>
            <person name="Benes V."/>
            <person name="Wurmbach E."/>
            <person name="Drzonek H."/>
            <person name="Erfle H."/>
            <person name="Jordan N."/>
            <person name="Bangert S."/>
            <person name="Wiedelmann R."/>
            <person name="Kranz H."/>
            <person name="Voss H."/>
            <person name="Holland R."/>
            <person name="Brandt P."/>
            <person name="Nyakatura G."/>
            <person name="Vezzi A."/>
            <person name="D'Angelo M."/>
            <person name="Pallavicini A."/>
            <person name="Toppo S."/>
            <person name="Simionati B."/>
            <person name="Conrad A."/>
            <person name="Hornischer K."/>
            <person name="Kauer G."/>
            <person name="Loehnert T.-H."/>
            <person name="Nordsiek G."/>
            <person name="Reichelt J."/>
            <person name="Scharfe M."/>
            <person name="Schoen O."/>
            <person name="Bargues M."/>
            <person name="Terol J."/>
            <person name="Climent J."/>
            <person name="Navarro P."/>
            <person name="Collado C."/>
            <person name="Perez-Perez A."/>
            <person name="Ottenwaelder B."/>
            <person name="Duchemin D."/>
            <person name="Cooke R."/>
            <person name="Laudie M."/>
            <person name="Berger-Llauro C."/>
            <person name="Purnelle B."/>
            <person name="Masuy D."/>
            <person name="de Haan M."/>
            <person name="Maarse A.C."/>
            <person name="Alcaraz J.-P."/>
            <person name="Cottet A."/>
            <person name="Casacuberta E."/>
            <person name="Monfort A."/>
            <person name="Argiriou A."/>
            <person name="Flores M."/>
            <person name="Liguori R."/>
            <person name="Vitale D."/>
            <person name="Mannhaupt G."/>
            <person name="Haase D."/>
            <person name="Schoof H."/>
            <person name="Rudd S."/>
            <person name="Zaccaria P."/>
            <person name="Mewes H.-W."/>
            <person name="Mayer K.F.X."/>
            <person name="Kaul S."/>
            <person name="Town C.D."/>
            <person name="Koo H.L."/>
            <person name="Tallon L.J."/>
            <person name="Jenkins J."/>
            <person name="Rooney T."/>
            <person name="Rizzo M."/>
            <person name="Walts A."/>
            <person name="Utterback T."/>
            <person name="Fujii C.Y."/>
            <person name="Shea T.P."/>
            <person name="Creasy T.H."/>
            <person name="Haas B."/>
            <person name="Maiti R."/>
            <person name="Wu D."/>
            <person name="Peterson J."/>
            <person name="Van Aken S."/>
            <person name="Pai G."/>
            <person name="Militscher J."/>
            <person name="Sellers P."/>
            <person name="Gill J.E."/>
            <person name="Feldblyum T.V."/>
            <person name="Preuss D."/>
            <person name="Lin X."/>
            <person name="Nierman W.C."/>
            <person name="Salzberg S.L."/>
            <person name="White O."/>
            <person name="Venter J.C."/>
            <person name="Fraser C.M."/>
            <person name="Kaneko T."/>
            <person name="Nakamura Y."/>
            <person name="Sato S."/>
            <person name="Kato T."/>
            <person name="Asamizu E."/>
            <person name="Sasamoto S."/>
            <person name="Kimura T."/>
            <person name="Idesawa K."/>
            <person name="Kawashima K."/>
            <person name="Kishida Y."/>
            <person name="Kiyokawa C."/>
            <person name="Kohara M."/>
            <person name="Matsumoto M."/>
            <person name="Matsuno A."/>
            <person name="Muraki A."/>
            <person name="Nakayama S."/>
            <person name="Nakazaki N."/>
            <person name="Shinpo S."/>
            <person name="Takeuchi C."/>
            <person name="Wada T."/>
            <person name="Watanabe A."/>
            <person name="Yamada M."/>
            <person name="Yasuda M."/>
            <person name="Tabata S."/>
        </authorList>
    </citation>
    <scope>NUCLEOTIDE SEQUENCE [LARGE SCALE GENOMIC DNA]</scope>
    <source>
        <strain>cv. Columbia</strain>
    </source>
</reference>
<reference key="2">
    <citation type="journal article" date="2017" name="Plant J.">
        <title>Araport11: a complete reannotation of the Arabidopsis thaliana reference genome.</title>
        <authorList>
            <person name="Cheng C.Y."/>
            <person name="Krishnakumar V."/>
            <person name="Chan A.P."/>
            <person name="Thibaud-Nissen F."/>
            <person name="Schobel S."/>
            <person name="Town C.D."/>
        </authorList>
    </citation>
    <scope>GENOME REANNOTATION</scope>
    <source>
        <strain>cv. Columbia</strain>
    </source>
</reference>
<reference key="3">
    <citation type="submission" date="2005-07" db="EMBL/GenBank/DDBJ databases">
        <authorList>
            <person name="Cheuk R.F."/>
            <person name="Chen H."/>
            <person name="Kim C.J."/>
            <person name="Shinn P."/>
            <person name="Ecker J.R."/>
        </authorList>
    </citation>
    <scope>NUCLEOTIDE SEQUENCE [LARGE SCALE MRNA]</scope>
    <source>
        <strain>cv. Columbia</strain>
    </source>
</reference>
<reference key="4">
    <citation type="submission" date="2006-07" db="EMBL/GenBank/DDBJ databases">
        <title>Large-scale analysis of RIKEN Arabidopsis full-length (RAFL) cDNAs.</title>
        <authorList>
            <person name="Totoki Y."/>
            <person name="Seki M."/>
            <person name="Ishida J."/>
            <person name="Nakajima M."/>
            <person name="Enju A."/>
            <person name="Kamiya A."/>
            <person name="Narusaka M."/>
            <person name="Shin-i T."/>
            <person name="Nakagawa M."/>
            <person name="Sakamoto N."/>
            <person name="Oishi K."/>
            <person name="Kohara Y."/>
            <person name="Kobayashi M."/>
            <person name="Toyoda A."/>
            <person name="Sakaki Y."/>
            <person name="Sakurai T."/>
            <person name="Iida K."/>
            <person name="Akiyama K."/>
            <person name="Satou M."/>
            <person name="Toyoda T."/>
            <person name="Konagaya A."/>
            <person name="Carninci P."/>
            <person name="Kawai J."/>
            <person name="Hayashizaki Y."/>
            <person name="Shinozaki K."/>
        </authorList>
    </citation>
    <scope>NUCLEOTIDE SEQUENCE [LARGE SCALE MRNA]</scope>
    <source>
        <strain>cv. Columbia</strain>
    </source>
</reference>
<reference key="5">
    <citation type="journal article" date="2001" name="J. Biol. Chem.">
        <title>Phylogenetic analysis of the UDP-glycosyltransferase multigene family of Arabidopsis thaliana.</title>
        <authorList>
            <person name="Li Y."/>
            <person name="Baldauf S."/>
            <person name="Lim E.K."/>
            <person name="Bowles D.J."/>
        </authorList>
    </citation>
    <scope>GENE FAMILY</scope>
</reference>
<keyword id="KW-0328">Glycosyltransferase</keyword>
<keyword id="KW-1185">Reference proteome</keyword>
<keyword id="KW-0808">Transferase</keyword>
<dbReference type="EC" id="2.4.1.-"/>
<dbReference type="EMBL" id="AL096859">
    <property type="protein sequence ID" value="CAB51195.1"/>
    <property type="status" value="ALT_SEQ"/>
    <property type="molecule type" value="Genomic_DNA"/>
</dbReference>
<dbReference type="EMBL" id="CP002686">
    <property type="protein sequence ID" value="AEE78195.1"/>
    <property type="molecule type" value="Genomic_DNA"/>
</dbReference>
<dbReference type="EMBL" id="BT023725">
    <property type="protein sequence ID" value="AAZ23917.1"/>
    <property type="molecule type" value="mRNA"/>
</dbReference>
<dbReference type="EMBL" id="AK229001">
    <property type="protein sequence ID" value="BAF00888.1"/>
    <property type="molecule type" value="mRNA"/>
</dbReference>
<dbReference type="PIR" id="T12980">
    <property type="entry name" value="T12980"/>
</dbReference>
<dbReference type="RefSeq" id="NP_190254.2">
    <property type="nucleotide sequence ID" value="NM_114537.4"/>
</dbReference>
<dbReference type="SMR" id="Q494Q1"/>
<dbReference type="FunCoup" id="Q494Q1">
    <property type="interactions" value="178"/>
</dbReference>
<dbReference type="STRING" id="3702.Q494Q1"/>
<dbReference type="CAZy" id="GT1">
    <property type="family name" value="Glycosyltransferase Family 1"/>
</dbReference>
<dbReference type="PaxDb" id="3702-AT3G46700.1"/>
<dbReference type="ProteomicsDB" id="228712"/>
<dbReference type="EnsemblPlants" id="AT3G46700.1">
    <property type="protein sequence ID" value="AT3G46700.1"/>
    <property type="gene ID" value="AT3G46700"/>
</dbReference>
<dbReference type="GeneID" id="823823"/>
<dbReference type="Gramene" id="AT3G46700.1">
    <property type="protein sequence ID" value="AT3G46700.1"/>
    <property type="gene ID" value="AT3G46700"/>
</dbReference>
<dbReference type="KEGG" id="ath:AT3G46700"/>
<dbReference type="Araport" id="AT3G46700"/>
<dbReference type="TAIR" id="AT3G46700"/>
<dbReference type="eggNOG" id="KOG1192">
    <property type="taxonomic scope" value="Eukaryota"/>
</dbReference>
<dbReference type="HOGENOM" id="CLU_001724_0_0_1"/>
<dbReference type="InParanoid" id="Q494Q1"/>
<dbReference type="OMA" id="MICKPFT"/>
<dbReference type="PhylomeDB" id="Q494Q1"/>
<dbReference type="BioCyc" id="ARA:AT3G46700-MONOMER"/>
<dbReference type="PRO" id="PR:Q494Q1"/>
<dbReference type="Proteomes" id="UP000006548">
    <property type="component" value="Chromosome 3"/>
</dbReference>
<dbReference type="ExpressionAtlas" id="Q494Q1">
    <property type="expression patterns" value="baseline and differential"/>
</dbReference>
<dbReference type="GO" id="GO:0008194">
    <property type="term" value="F:UDP-glycosyltransferase activity"/>
    <property type="evidence" value="ECO:0007669"/>
    <property type="project" value="InterPro"/>
</dbReference>
<dbReference type="CDD" id="cd03784">
    <property type="entry name" value="GT1_Gtf-like"/>
    <property type="match status" value="1"/>
</dbReference>
<dbReference type="FunFam" id="3.40.50.2000:FF:000040">
    <property type="entry name" value="UDP-glycosyltransferase 76C1"/>
    <property type="match status" value="1"/>
</dbReference>
<dbReference type="FunFam" id="3.40.50.2000:FF:000151">
    <property type="entry name" value="UDP-glycosyltransferase 76E9"/>
    <property type="match status" value="1"/>
</dbReference>
<dbReference type="Gene3D" id="3.40.50.2000">
    <property type="entry name" value="Glycogen Phosphorylase B"/>
    <property type="match status" value="2"/>
</dbReference>
<dbReference type="InterPro" id="IPR002213">
    <property type="entry name" value="UDP_glucos_trans"/>
</dbReference>
<dbReference type="PANTHER" id="PTHR11926">
    <property type="entry name" value="GLUCOSYL/GLUCURONOSYL TRANSFERASES"/>
    <property type="match status" value="1"/>
</dbReference>
<dbReference type="PANTHER" id="PTHR11926:SF913">
    <property type="entry name" value="UDP-GLYCOSYLTRANSFERASE SUPERFAMILY PROTEIN-RELATED"/>
    <property type="match status" value="1"/>
</dbReference>
<dbReference type="Pfam" id="PF00201">
    <property type="entry name" value="UDPGT"/>
    <property type="match status" value="1"/>
</dbReference>
<dbReference type="SUPFAM" id="SSF53756">
    <property type="entry name" value="UDP-Glycosyltransferase/glycogen phosphorylase"/>
    <property type="match status" value="1"/>
</dbReference>
<evidence type="ECO:0000250" key="1"/>
<evidence type="ECO:0000305" key="2"/>
<sequence>MEKRVEKRRIVLVPLPLLGHFTPMMQLGQALILKGFSIIVPQGEFNRVNSSQKFPGFQFITIPDSELEANGPVGSLTQLNKIMEASFKDCIRQLLKQQGNDIACIIYDEFMYFCGAVAEELKLPNFIFSTQTATHKVCCNVLSKLNAKKYLIDMEEHDVQNKVVENMHPLRYKDLPTATFGELEPFLELCRDVVNKRTASAVIINTVTCLESSSLTRLQQELQIPVYPLGPLHITDSSTGFTVLQEDRSCVEWLNKQKPRSVIYISLGSMVLMETKEMLEMAWGMLNSNQPFLWVIRPGSVSGSEGIESLPEEVSKMVLEKGYIVKWAPQIEVLGHPSVGGFWSHCGWNSTLESIVEGVPMICRPYQGEQMLNAIYLESVWRIGIQVGGELERGAVERAVKRLIVDKEGASMRERTLVLKEKLKASIRGGGSSCNALDELVKHLKTE</sequence>
<accession>Q494Q1</accession>
<accession>Q9STE4</accession>
<gene>
    <name type="primary">UGT76E3</name>
    <name type="ordered locus">At3g46700</name>
    <name type="ORF">T6H20.270</name>
</gene>
<protein>
    <recommendedName>
        <fullName>UDP-glycosyltransferase 76E3</fullName>
        <ecNumber>2.4.1.-</ecNumber>
    </recommendedName>
</protein>